<dbReference type="EC" id="5.4.99.60"/>
<dbReference type="EMBL" id="L12006">
    <property type="protein sequence ID" value="AAA27254.1"/>
    <property type="molecule type" value="Genomic_DNA"/>
</dbReference>
<dbReference type="EMBL" id="AE006468">
    <property type="protein sequence ID" value="AAL20937.1"/>
    <property type="molecule type" value="Genomic_DNA"/>
</dbReference>
<dbReference type="PIR" id="S21127">
    <property type="entry name" value="S21127"/>
</dbReference>
<dbReference type="RefSeq" id="NP_460978.1">
    <property type="nucleotide sequence ID" value="NC_003197.2"/>
</dbReference>
<dbReference type="RefSeq" id="WP_000558988.1">
    <property type="nucleotide sequence ID" value="NC_003197.2"/>
</dbReference>
<dbReference type="SMR" id="Q05601"/>
<dbReference type="STRING" id="99287.STM2033"/>
<dbReference type="PaxDb" id="99287-STM2033"/>
<dbReference type="GeneID" id="1253554"/>
<dbReference type="KEGG" id="stm:STM2033"/>
<dbReference type="PATRIC" id="fig|99287.12.peg.2155"/>
<dbReference type="HOGENOM" id="CLU_084703_1_1_6"/>
<dbReference type="OMA" id="GAPIFCD"/>
<dbReference type="PhylomeDB" id="Q05601"/>
<dbReference type="BioCyc" id="MetaCyc:MONOMER-13227"/>
<dbReference type="BioCyc" id="SENT99287:STM2033-MONOMER"/>
<dbReference type="UniPathway" id="UPA00148">
    <property type="reaction ID" value="UER00230"/>
</dbReference>
<dbReference type="Proteomes" id="UP000001014">
    <property type="component" value="Chromosome"/>
</dbReference>
<dbReference type="GO" id="GO:0043778">
    <property type="term" value="F:cobalt-precorrin-8 methylmutase activity"/>
    <property type="evidence" value="ECO:0007669"/>
    <property type="project" value="UniProtKB-EC"/>
</dbReference>
<dbReference type="GO" id="GO:0016993">
    <property type="term" value="F:precorrin-8X methylmutase activity"/>
    <property type="evidence" value="ECO:0007669"/>
    <property type="project" value="InterPro"/>
</dbReference>
<dbReference type="GO" id="GO:0009236">
    <property type="term" value="P:cobalamin biosynthetic process"/>
    <property type="evidence" value="ECO:0007669"/>
    <property type="project" value="UniProtKB-UniPathway"/>
</dbReference>
<dbReference type="Gene3D" id="3.40.50.10230">
    <property type="entry name" value="Cobalamin biosynthesis CobH/CbiC, precorrin-8X methylmutase"/>
    <property type="match status" value="1"/>
</dbReference>
<dbReference type="InterPro" id="IPR003722">
    <property type="entry name" value="Cbl_synth_CobH/CbiC"/>
</dbReference>
<dbReference type="InterPro" id="IPR036588">
    <property type="entry name" value="CobH/CbiC_sf"/>
</dbReference>
<dbReference type="NCBIfam" id="NF006137">
    <property type="entry name" value="PRK08286.1"/>
    <property type="match status" value="1"/>
</dbReference>
<dbReference type="PANTHER" id="PTHR43588">
    <property type="entry name" value="COBALT-PRECORRIN-8 METHYLMUTASE"/>
    <property type="match status" value="1"/>
</dbReference>
<dbReference type="PANTHER" id="PTHR43588:SF1">
    <property type="entry name" value="COBALT-PRECORRIN-8 METHYLMUTASE"/>
    <property type="match status" value="1"/>
</dbReference>
<dbReference type="Pfam" id="PF02570">
    <property type="entry name" value="CbiC"/>
    <property type="match status" value="1"/>
</dbReference>
<dbReference type="SUPFAM" id="SSF63965">
    <property type="entry name" value="Precorrin-8X methylmutase CbiC/CobH"/>
    <property type="match status" value="1"/>
</dbReference>
<accession>Q05601</accession>
<organism>
    <name type="scientific">Salmonella typhimurium (strain LT2 / SGSC1412 / ATCC 700720)</name>
    <dbReference type="NCBI Taxonomy" id="99287"/>
    <lineage>
        <taxon>Bacteria</taxon>
        <taxon>Pseudomonadati</taxon>
        <taxon>Pseudomonadota</taxon>
        <taxon>Gammaproteobacteria</taxon>
        <taxon>Enterobacterales</taxon>
        <taxon>Enterobacteriaceae</taxon>
        <taxon>Salmonella</taxon>
    </lineage>
</organism>
<keyword id="KW-0169">Cobalamin biosynthesis</keyword>
<keyword id="KW-0903">Direct protein sequencing</keyword>
<keyword id="KW-0413">Isomerase</keyword>
<keyword id="KW-1185">Reference proteome</keyword>
<evidence type="ECO:0000250" key="1"/>
<evidence type="ECO:0000305" key="2"/>
<name>CBIC_SALTY</name>
<proteinExistence type="evidence at protein level"/>
<reference key="1">
    <citation type="journal article" date="1993" name="J. Bacteriol.">
        <title>Characterization of the cobalamin (vitamin B12) biosynthetic genes of Salmonella typhimurium.</title>
        <authorList>
            <person name="Roth J.R."/>
            <person name="Lawrence J.G."/>
            <person name="Rubenfield M."/>
            <person name="Kieffer-Higgins S."/>
            <person name="Church G.M."/>
        </authorList>
    </citation>
    <scope>NUCLEOTIDE SEQUENCE [GENOMIC DNA]</scope>
    <scope>PROTEIN SEQUENCE OF N-TERMINUS</scope>
    <source>
        <strain>LT2</strain>
    </source>
</reference>
<reference key="2">
    <citation type="journal article" date="2001" name="Nature">
        <title>Complete genome sequence of Salmonella enterica serovar Typhimurium LT2.</title>
        <authorList>
            <person name="McClelland M."/>
            <person name="Sanderson K.E."/>
            <person name="Spieth J."/>
            <person name="Clifton S.W."/>
            <person name="Latreille P."/>
            <person name="Courtney L."/>
            <person name="Porwollik S."/>
            <person name="Ali J."/>
            <person name="Dante M."/>
            <person name="Du F."/>
            <person name="Hou S."/>
            <person name="Layman D."/>
            <person name="Leonard S."/>
            <person name="Nguyen C."/>
            <person name="Scott K."/>
            <person name="Holmes A."/>
            <person name="Grewal N."/>
            <person name="Mulvaney E."/>
            <person name="Ryan E."/>
            <person name="Sun H."/>
            <person name="Florea L."/>
            <person name="Miller W."/>
            <person name="Stoneking T."/>
            <person name="Nhan M."/>
            <person name="Waterston R."/>
            <person name="Wilson R.K."/>
        </authorList>
    </citation>
    <scope>NUCLEOTIDE SEQUENCE [LARGE SCALE GENOMIC DNA]</scope>
    <source>
        <strain>LT2 / SGSC1412 / ATCC 700720</strain>
    </source>
</reference>
<reference key="3">
    <citation type="journal article" date="1992" name="FEBS Lett.">
        <title>Expression of 9 Salmonella typhimurium enzymes for cobinamide synthesis. Identification of the 11-methyl and 20-methyl transferases of corrin biosynthesis.</title>
        <authorList>
            <person name="Roessner C.A."/>
            <person name="Warren M.J."/>
            <person name="Santander P.J."/>
            <person name="Atshaves B.P."/>
            <person name="Ozaki S."/>
            <person name="Stolowich N.J."/>
            <person name="Iida K."/>
            <person name="Scott A.I."/>
        </authorList>
    </citation>
    <scope>PROTEIN SEQUENCE OF 1-11</scope>
</reference>
<comment type="function">
    <text>Catalyzes the conversion of cobalt-precorrin-8 to cobyrinate.</text>
</comment>
<comment type="catalytic activity">
    <reaction>
        <text>Co-precorrin-8X = cob(II)yrinate</text>
        <dbReference type="Rhea" id="RHEA:16209"/>
        <dbReference type="ChEBI" id="CHEBI:58894"/>
        <dbReference type="ChEBI" id="CHEBI:70792"/>
        <dbReference type="EC" id="5.4.99.60"/>
    </reaction>
</comment>
<comment type="pathway">
    <text>Cofactor biosynthesis; adenosylcobalamin biosynthesis; cob(II)yrinate a,c-diamide from sirohydrochlorin (anaerobic route): step 9/10.</text>
</comment>
<comment type="subunit">
    <text evidence="1">Homodimer.</text>
</comment>
<comment type="similarity">
    <text evidence="2">Belongs to the CobH/CbiC family.</text>
</comment>
<feature type="chain" id="PRO_0000135923" description="Cobalt-precorrin-8 methylmutase">
    <location>
        <begin position="1"/>
        <end position="210"/>
    </location>
</feature>
<feature type="active site" description="Proton donor/acceptor" evidence="1">
    <location>
        <position position="45"/>
    </location>
</feature>
<feature type="binding site" evidence="1">
    <location>
        <position position="14"/>
    </location>
    <ligand>
        <name>substrate</name>
    </ligand>
</feature>
<feature type="binding site" evidence="1">
    <location>
        <position position="42"/>
    </location>
    <ligand>
        <name>substrate</name>
    </ligand>
</feature>
<sequence length="210" mass="23034">MHYIQQPQTIEANSFTIISDIIRETRPDYRFASPLHEAIIKRVIHTTADFDWLDILWFSADALEQLCDALRHPCIIYTDTTMALSGINKRLLATFGGECRCYISDPRVVRAAQTQGITRSMAAVDIAIAEEEKNKLFVFGNAPTALFRLLEHNVTVSGVVGVPVGFVGAAESKEALTHSHFPAVAALGRKGGSNVAAAIVNALLYHLREA</sequence>
<gene>
    <name type="primary">cbiC</name>
    <name type="ordered locus">STM2033</name>
</gene>
<protein>
    <recommendedName>
        <fullName>Cobalt-precorrin-8 methylmutase</fullName>
        <ecNumber>5.4.99.60</ecNumber>
    </recommendedName>
    <alternativeName>
        <fullName>Cobalt-precorrin isomerase</fullName>
    </alternativeName>
</protein>